<keyword id="KW-0175">Coiled coil</keyword>
<keyword id="KW-0963">Cytoplasm</keyword>
<keyword id="KW-0479">Metal-binding</keyword>
<keyword id="KW-1185">Reference proteome</keyword>
<keyword id="KW-0862">Zinc</keyword>
<keyword id="KW-0863">Zinc-finger</keyword>
<gene>
    <name type="primary">Trim12a</name>
    <name type="synonym">Trim12</name>
</gene>
<sequence length="284" mass="33320">MASQFMKNLKEEVTCPVCLNLMVKPVSADCGHTFCQGCITLYFESIKCDKKVFICPVCRISYQFSNLRPNRNVANIVERLKMFKPSPEEEQKVFNCARHGKKLQLFCRKDMMAICWLCERSQEHRGHKTALIEEVAQEYKEQLQVVLQRLMADKKKFENWKDDLQKDRTYWENQIQKDVQNVRSEFKRMRDIMDSEEKKELQKLRQEKEDILNNLAESESEHAQQSKLLEDFISDVEHQLQCSDIEILQVRLQDVPGSESQKAWKPLPFLSAAVVFLVMTVSSS</sequence>
<comment type="subcellular location">
    <subcellularLocation>
        <location evidence="4">Cytoplasm</location>
    </subcellularLocation>
</comment>
<comment type="tissue specificity">
    <text evidence="4">Expressed in embryonic CNS, liver, kidney, olfactory epithelium.</text>
</comment>
<comment type="similarity">
    <text evidence="5">Belongs to the TRIM/RBCC family.</text>
</comment>
<organism>
    <name type="scientific">Mus musculus</name>
    <name type="common">Mouse</name>
    <dbReference type="NCBI Taxonomy" id="10090"/>
    <lineage>
        <taxon>Eukaryota</taxon>
        <taxon>Metazoa</taxon>
        <taxon>Chordata</taxon>
        <taxon>Craniata</taxon>
        <taxon>Vertebrata</taxon>
        <taxon>Euteleostomi</taxon>
        <taxon>Mammalia</taxon>
        <taxon>Eutheria</taxon>
        <taxon>Euarchontoglires</taxon>
        <taxon>Glires</taxon>
        <taxon>Rodentia</taxon>
        <taxon>Myomorpha</taxon>
        <taxon>Muroidea</taxon>
        <taxon>Muridae</taxon>
        <taxon>Murinae</taxon>
        <taxon>Mus</taxon>
        <taxon>Mus</taxon>
    </lineage>
</organism>
<feature type="chain" id="PRO_0000056217" description="Tripartite motif-containing protein 12A">
    <location>
        <begin position="1"/>
        <end position="284"/>
    </location>
</feature>
<feature type="zinc finger region" description="RING-type" evidence="3">
    <location>
        <begin position="15"/>
        <end position="59"/>
    </location>
</feature>
<feature type="zinc finger region" description="B box-type" evidence="2">
    <location>
        <begin position="91"/>
        <end position="132"/>
    </location>
</feature>
<feature type="coiled-coil region" evidence="1">
    <location>
        <begin position="130"/>
        <end position="234"/>
    </location>
</feature>
<feature type="binding site" evidence="2">
    <location>
        <position position="96"/>
    </location>
    <ligand>
        <name>Zn(2+)</name>
        <dbReference type="ChEBI" id="CHEBI:29105"/>
    </ligand>
</feature>
<feature type="binding site" evidence="2">
    <location>
        <position position="99"/>
    </location>
    <ligand>
        <name>Zn(2+)</name>
        <dbReference type="ChEBI" id="CHEBI:29105"/>
    </ligand>
</feature>
<feature type="binding site" evidence="2">
    <location>
        <position position="118"/>
    </location>
    <ligand>
        <name>Zn(2+)</name>
        <dbReference type="ChEBI" id="CHEBI:29105"/>
    </ligand>
</feature>
<feature type="binding site" evidence="2">
    <location>
        <position position="124"/>
    </location>
    <ligand>
        <name>Zn(2+)</name>
        <dbReference type="ChEBI" id="CHEBI:29105"/>
    </ligand>
</feature>
<feature type="sequence conflict" description="In Ref. 2; BAB26491." evidence="5" ref="2">
    <original>VRLQDVPGSESQKAWKPLPFLSAAVVFLVMTVSSS</original>
    <variation>GVENIIERSHTFSMKKPKAIAREQRKFRAPDLQGMLQVLQEVTEAHRY</variation>
    <location>
        <begin position="250"/>
        <end position="284"/>
    </location>
</feature>
<accession>Q99PQ1</accession>
<accession>Q9D704</accession>
<evidence type="ECO:0000255" key="1"/>
<evidence type="ECO:0000255" key="2">
    <source>
        <dbReference type="PROSITE-ProRule" id="PRU00024"/>
    </source>
</evidence>
<evidence type="ECO:0000255" key="3">
    <source>
        <dbReference type="PROSITE-ProRule" id="PRU00175"/>
    </source>
</evidence>
<evidence type="ECO:0000269" key="4">
    <source>
    </source>
</evidence>
<evidence type="ECO:0000305" key="5"/>
<protein>
    <recommendedName>
        <fullName>Tripartite motif-containing protein 12A</fullName>
    </recommendedName>
</protein>
<dbReference type="EMBL" id="AF220126">
    <property type="protein sequence ID" value="AAG53499.1"/>
    <property type="molecule type" value="mRNA"/>
</dbReference>
<dbReference type="EMBL" id="AK009769">
    <property type="protein sequence ID" value="BAB26491.1"/>
    <property type="molecule type" value="mRNA"/>
</dbReference>
<dbReference type="CCDS" id="CCDS90296.1"/>
<dbReference type="RefSeq" id="NP_001355683.1">
    <property type="nucleotide sequence ID" value="NM_001368754.1"/>
</dbReference>
<dbReference type="RefSeq" id="NP_076324.2">
    <property type="nucleotide sequence ID" value="NM_023835.2"/>
</dbReference>
<dbReference type="RefSeq" id="XP_017167861.1">
    <property type="nucleotide sequence ID" value="XM_017312372.1"/>
</dbReference>
<dbReference type="RefSeq" id="XP_017167862.1">
    <property type="nucleotide sequence ID" value="XM_017312373.1"/>
</dbReference>
<dbReference type="RefSeq" id="XP_017167863.1">
    <property type="nucleotide sequence ID" value="XM_017312374.1"/>
</dbReference>
<dbReference type="SMR" id="Q99PQ1"/>
<dbReference type="BioGRID" id="218256">
    <property type="interactions" value="2"/>
</dbReference>
<dbReference type="FunCoup" id="Q99PQ1">
    <property type="interactions" value="62"/>
</dbReference>
<dbReference type="STRING" id="10090.ENSMUSP00000102452"/>
<dbReference type="PaxDb" id="10090-ENSMUSP00000102452"/>
<dbReference type="ProteomicsDB" id="259084"/>
<dbReference type="DNASU" id="76681"/>
<dbReference type="Ensembl" id="ENSMUST00000070943.7">
    <property type="protein sequence ID" value="ENSMUSP00000065008.7"/>
    <property type="gene ID" value="ENSMUSG00000066258.14"/>
</dbReference>
<dbReference type="GeneID" id="76681"/>
<dbReference type="KEGG" id="mmu:76681"/>
<dbReference type="UCSC" id="uc009ivw.1">
    <property type="organism name" value="mouse"/>
</dbReference>
<dbReference type="AGR" id="MGI:1923931"/>
<dbReference type="CTD" id="76681"/>
<dbReference type="MGI" id="MGI:1923931">
    <property type="gene designation" value="Trim12a"/>
</dbReference>
<dbReference type="VEuPathDB" id="HostDB:ENSMUSG00000066258"/>
<dbReference type="eggNOG" id="KOG2177">
    <property type="taxonomic scope" value="Eukaryota"/>
</dbReference>
<dbReference type="GeneTree" id="ENSGT00940000154647"/>
<dbReference type="InParanoid" id="Q99PQ1"/>
<dbReference type="OrthoDB" id="654191at2759"/>
<dbReference type="BioGRID-ORCS" id="76681">
    <property type="hits" value="1 hit in 43 CRISPR screens"/>
</dbReference>
<dbReference type="ChiTaRS" id="Trim12a">
    <property type="organism name" value="mouse"/>
</dbReference>
<dbReference type="PRO" id="PR:Q99PQ1"/>
<dbReference type="Proteomes" id="UP000000589">
    <property type="component" value="Chromosome 7"/>
</dbReference>
<dbReference type="RNAct" id="Q99PQ1">
    <property type="molecule type" value="protein"/>
</dbReference>
<dbReference type="Bgee" id="ENSMUSG00000066258">
    <property type="expression patterns" value="Expressed in granulocyte and 124 other cell types or tissues"/>
</dbReference>
<dbReference type="ExpressionAtlas" id="Q99PQ1">
    <property type="expression patterns" value="baseline and differential"/>
</dbReference>
<dbReference type="GO" id="GO:0005737">
    <property type="term" value="C:cytoplasm"/>
    <property type="evidence" value="ECO:0000314"/>
    <property type="project" value="MGI"/>
</dbReference>
<dbReference type="GO" id="GO:0008270">
    <property type="term" value="F:zinc ion binding"/>
    <property type="evidence" value="ECO:0007669"/>
    <property type="project" value="UniProtKB-KW"/>
</dbReference>
<dbReference type="CDD" id="cd19761">
    <property type="entry name" value="Bbox2_TRIM5-like"/>
    <property type="match status" value="1"/>
</dbReference>
<dbReference type="FunFam" id="3.30.160.60:FF:000386">
    <property type="entry name" value="Tripartite motif-containing 5 (Predicted)"/>
    <property type="match status" value="1"/>
</dbReference>
<dbReference type="FunFam" id="3.30.40.10:FF:000144">
    <property type="entry name" value="Tripartite motif-containing 5 (Predicted)"/>
    <property type="match status" value="1"/>
</dbReference>
<dbReference type="Gene3D" id="3.30.160.60">
    <property type="entry name" value="Classic Zinc Finger"/>
    <property type="match status" value="1"/>
</dbReference>
<dbReference type="Gene3D" id="3.30.40.10">
    <property type="entry name" value="Zinc/RING finger domain, C3HC4 (zinc finger)"/>
    <property type="match status" value="1"/>
</dbReference>
<dbReference type="InterPro" id="IPR050143">
    <property type="entry name" value="TRIM/RBCC"/>
</dbReference>
<dbReference type="InterPro" id="IPR000315">
    <property type="entry name" value="Znf_B-box"/>
</dbReference>
<dbReference type="InterPro" id="IPR001841">
    <property type="entry name" value="Znf_RING"/>
</dbReference>
<dbReference type="InterPro" id="IPR013083">
    <property type="entry name" value="Znf_RING/FYVE/PHD"/>
</dbReference>
<dbReference type="InterPro" id="IPR017907">
    <property type="entry name" value="Znf_RING_CS"/>
</dbReference>
<dbReference type="PANTHER" id="PTHR24103">
    <property type="entry name" value="E3 UBIQUITIN-PROTEIN LIGASE TRIM"/>
    <property type="match status" value="1"/>
</dbReference>
<dbReference type="Pfam" id="PF00643">
    <property type="entry name" value="zf-B_box"/>
    <property type="match status" value="1"/>
</dbReference>
<dbReference type="Pfam" id="PF15227">
    <property type="entry name" value="zf-C3HC4_4"/>
    <property type="match status" value="1"/>
</dbReference>
<dbReference type="SMART" id="SM00336">
    <property type="entry name" value="BBOX"/>
    <property type="match status" value="1"/>
</dbReference>
<dbReference type="SMART" id="SM00184">
    <property type="entry name" value="RING"/>
    <property type="match status" value="1"/>
</dbReference>
<dbReference type="SUPFAM" id="SSF57845">
    <property type="entry name" value="B-box zinc-binding domain"/>
    <property type="match status" value="1"/>
</dbReference>
<dbReference type="SUPFAM" id="SSF57850">
    <property type="entry name" value="RING/U-box"/>
    <property type="match status" value="1"/>
</dbReference>
<dbReference type="PROSITE" id="PS50119">
    <property type="entry name" value="ZF_BBOX"/>
    <property type="match status" value="1"/>
</dbReference>
<dbReference type="PROSITE" id="PS00518">
    <property type="entry name" value="ZF_RING_1"/>
    <property type="match status" value="1"/>
</dbReference>
<dbReference type="PROSITE" id="PS50089">
    <property type="entry name" value="ZF_RING_2"/>
    <property type="match status" value="1"/>
</dbReference>
<reference key="1">
    <citation type="journal article" date="2001" name="EMBO J.">
        <title>The tripartite motif family identifies cell compartments.</title>
        <authorList>
            <person name="Reymond A."/>
            <person name="Meroni G."/>
            <person name="Fantozzi A."/>
            <person name="Merla G."/>
            <person name="Cairo S."/>
            <person name="Luzi L."/>
            <person name="Riganelli D."/>
            <person name="Zanaria E."/>
            <person name="Messali S."/>
            <person name="Cainarca S."/>
            <person name="Guffanti A."/>
            <person name="Minucci S."/>
            <person name="Pelicci P.G."/>
            <person name="Ballabio A."/>
        </authorList>
    </citation>
    <scope>NUCLEOTIDE SEQUENCE [MRNA]</scope>
    <scope>SUBCELLULAR LOCATION</scope>
    <scope>TISSUE SPECIFICITY</scope>
</reference>
<reference key="2">
    <citation type="journal article" date="2001" name="Nature">
        <title>Functional annotation of a full-length mouse cDNA collection.</title>
        <authorList>
            <person name="Kawai J."/>
            <person name="Shinagawa A."/>
            <person name="Shibata K."/>
            <person name="Yoshino M."/>
            <person name="Itoh M."/>
            <person name="Ishii Y."/>
            <person name="Arakawa T."/>
            <person name="Hara A."/>
            <person name="Fukunishi Y."/>
            <person name="Konno H."/>
            <person name="Adachi J."/>
            <person name="Fukuda S."/>
            <person name="Aizawa K."/>
            <person name="Izawa M."/>
            <person name="Nishi K."/>
            <person name="Kiyosawa H."/>
            <person name="Kondo S."/>
            <person name="Yamanaka I."/>
            <person name="Saito T."/>
            <person name="Okazaki Y."/>
            <person name="Gojobori T."/>
            <person name="Bono H."/>
            <person name="Kasukawa T."/>
            <person name="Saito R."/>
            <person name="Kadota K."/>
            <person name="Matsuda H.A."/>
            <person name="Ashburner M."/>
            <person name="Batalov S."/>
            <person name="Casavant T."/>
            <person name="Fleischmann W."/>
            <person name="Gaasterland T."/>
            <person name="Gissi C."/>
            <person name="King B."/>
            <person name="Kochiwa H."/>
            <person name="Kuehl P."/>
            <person name="Lewis S."/>
            <person name="Matsuo Y."/>
            <person name="Nikaido I."/>
            <person name="Pesole G."/>
            <person name="Quackenbush J."/>
            <person name="Schriml L.M."/>
            <person name="Staubli F."/>
            <person name="Suzuki R."/>
            <person name="Tomita M."/>
            <person name="Wagner L."/>
            <person name="Washio T."/>
            <person name="Sakai K."/>
            <person name="Okido T."/>
            <person name="Furuno M."/>
            <person name="Aono H."/>
            <person name="Baldarelli R."/>
            <person name="Barsh G."/>
            <person name="Blake J."/>
            <person name="Boffelli D."/>
            <person name="Bojunga N."/>
            <person name="Carninci P."/>
            <person name="de Bonaldo M.F."/>
            <person name="Brownstein M.J."/>
            <person name="Bult C."/>
            <person name="Fletcher C."/>
            <person name="Fujita M."/>
            <person name="Gariboldi M."/>
            <person name="Gustincich S."/>
            <person name="Hill D."/>
            <person name="Hofmann M."/>
            <person name="Hume D.A."/>
            <person name="Kamiya M."/>
            <person name="Lee N.H."/>
            <person name="Lyons P."/>
            <person name="Marchionni L."/>
            <person name="Mashima J."/>
            <person name="Mazzarelli J."/>
            <person name="Mombaerts P."/>
            <person name="Nordone P."/>
            <person name="Ring B."/>
            <person name="Ringwald M."/>
            <person name="Rodriguez I."/>
            <person name="Sakamoto N."/>
            <person name="Sasaki H."/>
            <person name="Sato K."/>
            <person name="Schoenbach C."/>
            <person name="Seya T."/>
            <person name="Shibata Y."/>
            <person name="Storch K.-F."/>
            <person name="Suzuki H."/>
            <person name="Toyo-oka K."/>
            <person name="Wang K.H."/>
            <person name="Weitz C."/>
            <person name="Whittaker C."/>
            <person name="Wilming L."/>
            <person name="Wynshaw-Boris A."/>
            <person name="Yoshida K."/>
            <person name="Hasegawa Y."/>
            <person name="Kawaji H."/>
            <person name="Kohtsuki S."/>
            <person name="Hayashizaki Y."/>
        </authorList>
    </citation>
    <scope>NUCLEOTIDE SEQUENCE [MRNA]</scope>
    <source>
        <strain>C57BL/6J</strain>
        <tissue>Tongue</tissue>
    </source>
</reference>
<proteinExistence type="evidence at transcript level"/>
<name>TR12A_MOUSE</name>